<accession>A3Q4Y5</accession>
<proteinExistence type="inferred from homology"/>
<gene>
    <name type="ordered locus">Mjls_4441</name>
</gene>
<comment type="function">
    <text evidence="1">Probable oxidase that might be involved in lipid metabolism.</text>
</comment>
<comment type="cofactor">
    <cofactor evidence="1">
        <name>Fe cation</name>
        <dbReference type="ChEBI" id="CHEBI:24875"/>
    </cofactor>
    <text evidence="1">Binds 1 Fe cation per subunit.</text>
</comment>
<comment type="cofactor">
    <cofactor evidence="1">
        <name>Mn(2+)</name>
        <dbReference type="ChEBI" id="CHEBI:29035"/>
    </cofactor>
    <text evidence="1">Binds 1 manganese ion per subunit. The iron and manganese ions form a dinuclear manganese-iron cluster.</text>
</comment>
<comment type="subunit">
    <text evidence="1">Homodimer.</text>
</comment>
<comment type="similarity">
    <text evidence="2">Belongs to the ribonucleoside diphosphate reductase small chain family. R2-like ligand binding oxidase subfamily.</text>
</comment>
<evidence type="ECO:0000250" key="1">
    <source>
        <dbReference type="UniProtKB" id="P9WH69"/>
    </source>
</evidence>
<evidence type="ECO:0000305" key="2"/>
<keyword id="KW-0408">Iron</keyword>
<keyword id="KW-0464">Manganese</keyword>
<keyword id="KW-0479">Metal-binding</keyword>
<keyword id="KW-0560">Oxidoreductase</keyword>
<feature type="chain" id="PRO_0000375429" description="R2-like ligand binding oxidase">
    <location>
        <begin position="1"/>
        <end position="312"/>
    </location>
</feature>
<feature type="binding site" evidence="1">
    <location>
        <position position="68"/>
    </location>
    <ligand>
        <name>Mn(2+)</name>
        <dbReference type="ChEBI" id="CHEBI:29035"/>
    </ligand>
</feature>
<feature type="binding site" evidence="1">
    <location>
        <position position="101"/>
    </location>
    <ligand>
        <name>Fe cation</name>
        <dbReference type="ChEBI" id="CHEBI:24875"/>
    </ligand>
</feature>
<feature type="binding site" evidence="1">
    <location>
        <position position="101"/>
    </location>
    <ligand>
        <name>Mn(2+)</name>
        <dbReference type="ChEBI" id="CHEBI:29035"/>
    </ligand>
</feature>
<feature type="binding site" evidence="1">
    <location>
        <position position="104"/>
    </location>
    <ligand>
        <name>Mn(2+)</name>
        <dbReference type="ChEBI" id="CHEBI:29035"/>
    </ligand>
</feature>
<feature type="binding site" evidence="1">
    <location>
        <position position="167"/>
    </location>
    <ligand>
        <name>Fe cation</name>
        <dbReference type="ChEBI" id="CHEBI:24875"/>
    </ligand>
</feature>
<feature type="binding site" evidence="1">
    <location>
        <position position="202"/>
    </location>
    <ligand>
        <name>Fe cation</name>
        <dbReference type="ChEBI" id="CHEBI:24875"/>
    </ligand>
</feature>
<feature type="binding site" evidence="1">
    <location>
        <position position="205"/>
    </location>
    <ligand>
        <name>Fe cation</name>
        <dbReference type="ChEBI" id="CHEBI:24875"/>
    </ligand>
</feature>
<feature type="cross-link" description="3-(O4'-tyrosyl)-valine (Val-Tyr)" evidence="1">
    <location>
        <begin position="71"/>
        <end position="162"/>
    </location>
</feature>
<dbReference type="EC" id="1.-.-.-" evidence="1"/>
<dbReference type="EMBL" id="CP000580">
    <property type="protein sequence ID" value="ABO00213.1"/>
    <property type="molecule type" value="Genomic_DNA"/>
</dbReference>
<dbReference type="SMR" id="A3Q4Y5"/>
<dbReference type="KEGG" id="mjl:Mjls_4441"/>
<dbReference type="HOGENOM" id="CLU_072736_0_0_11"/>
<dbReference type="BioCyc" id="MSP164757:G1G8C-4483-MONOMER"/>
<dbReference type="GO" id="GO:0046872">
    <property type="term" value="F:metal ion binding"/>
    <property type="evidence" value="ECO:0007669"/>
    <property type="project" value="UniProtKB-KW"/>
</dbReference>
<dbReference type="GO" id="GO:0016491">
    <property type="term" value="F:oxidoreductase activity"/>
    <property type="evidence" value="ECO:0007669"/>
    <property type="project" value="UniProtKB-KW"/>
</dbReference>
<dbReference type="GO" id="GO:0009263">
    <property type="term" value="P:deoxyribonucleotide biosynthetic process"/>
    <property type="evidence" value="ECO:0007669"/>
    <property type="project" value="InterPro"/>
</dbReference>
<dbReference type="CDD" id="cd07911">
    <property type="entry name" value="RNRR2_Rv0233_like"/>
    <property type="match status" value="1"/>
</dbReference>
<dbReference type="Gene3D" id="1.10.620.20">
    <property type="entry name" value="Ribonucleotide Reductase, subunit A"/>
    <property type="match status" value="1"/>
</dbReference>
<dbReference type="InterPro" id="IPR009078">
    <property type="entry name" value="Ferritin-like_SF"/>
</dbReference>
<dbReference type="InterPro" id="IPR033908">
    <property type="entry name" value="R2LOX"/>
</dbReference>
<dbReference type="InterPro" id="IPR012348">
    <property type="entry name" value="RNR-like"/>
</dbReference>
<dbReference type="InterPro" id="IPR000358">
    <property type="entry name" value="RNR_small_fam"/>
</dbReference>
<dbReference type="NCBIfam" id="NF006199">
    <property type="entry name" value="PRK08326.1-2"/>
    <property type="match status" value="1"/>
</dbReference>
<dbReference type="NCBIfam" id="NF006200">
    <property type="entry name" value="PRK08326.1-3"/>
    <property type="match status" value="1"/>
</dbReference>
<dbReference type="NCBIfam" id="NF006201">
    <property type="entry name" value="PRK08326.1-4"/>
    <property type="match status" value="1"/>
</dbReference>
<dbReference type="Pfam" id="PF00268">
    <property type="entry name" value="Ribonuc_red_sm"/>
    <property type="match status" value="1"/>
</dbReference>
<dbReference type="SUPFAM" id="SSF47240">
    <property type="entry name" value="Ferritin-like"/>
    <property type="match status" value="1"/>
</dbReference>
<sequence length="312" mass="35407">MTRTRSDSLAAGGLNWDSMPLKLFAGGNAKFWDPADIDFSKDRADWESLSNLERDWATRLCAQFIAGEEAVTQDIQPFMAAMRAEGRLGDEMYLTQFAFEEAKHTQVFRMWLDAVGMTDDLQCYLDDLPSYRQMFYEELPASLEALATDPSPAAQVRASATYNHVIEGMMALTGYYAWHRICVDRKVLPGMQELVRRIGDDERRHMAWGTFTCRRHVAADDANWEVFENRMNELIPLALSNTDDSFALYDEIPFGFAKEEFQQYAADKGMRRFGTISSARGRALAEIDVDYSPLQLEDTFAAEDSRVLATSA</sequence>
<protein>
    <recommendedName>
        <fullName evidence="1">R2-like ligand binding oxidase</fullName>
        <ecNumber evidence="1">1.-.-.-</ecNumber>
    </recommendedName>
    <alternativeName>
        <fullName>Ribonucleotide reductase R2 subunit homolog</fullName>
    </alternativeName>
    <alternativeName>
        <fullName>Ribonucleotide reductase small subunit homolog</fullName>
    </alternativeName>
</protein>
<name>RIR2H_MYCSJ</name>
<reference key="1">
    <citation type="submission" date="2007-02" db="EMBL/GenBank/DDBJ databases">
        <title>Complete sequence of Mycobacterium sp. JLS.</title>
        <authorList>
            <consortium name="US DOE Joint Genome Institute"/>
            <person name="Copeland A."/>
            <person name="Lucas S."/>
            <person name="Lapidus A."/>
            <person name="Barry K."/>
            <person name="Detter J.C."/>
            <person name="Glavina del Rio T."/>
            <person name="Hammon N."/>
            <person name="Israni S."/>
            <person name="Dalin E."/>
            <person name="Tice H."/>
            <person name="Pitluck S."/>
            <person name="Chain P."/>
            <person name="Malfatti S."/>
            <person name="Shin M."/>
            <person name="Vergez L."/>
            <person name="Schmutz J."/>
            <person name="Larimer F."/>
            <person name="Land M."/>
            <person name="Hauser L."/>
            <person name="Kyrpides N."/>
            <person name="Mikhailova N."/>
            <person name="Miller C.D."/>
            <person name="Anderson A.J."/>
            <person name="Sims R.C."/>
            <person name="Richardson P."/>
        </authorList>
    </citation>
    <scope>NUCLEOTIDE SEQUENCE [LARGE SCALE GENOMIC DNA]</scope>
    <source>
        <strain>JLS</strain>
    </source>
</reference>
<organism>
    <name type="scientific">Mycobacterium sp. (strain JLS)</name>
    <dbReference type="NCBI Taxonomy" id="164757"/>
    <lineage>
        <taxon>Bacteria</taxon>
        <taxon>Bacillati</taxon>
        <taxon>Actinomycetota</taxon>
        <taxon>Actinomycetes</taxon>
        <taxon>Mycobacteriales</taxon>
        <taxon>Mycobacteriaceae</taxon>
        <taxon>Mycobacterium</taxon>
    </lineage>
</organism>